<sequence>MKGSTLREGTAMASPLPQDMEEELAPVGSEPGDPRAKPPVKPKPRGLPSKPALPAKPSLLVPVGPRPPRGPLAELPSARKMNMLAGPQPYGVSKRPLPFAPRPSAEATAGGDVTQESGKEDAGKEDLPPLTPPARCAALGGVRKAPAPFRPSSERFAACTVEEILAKMEQPRKEILASPDRLWGSRLTFNHDGSSRYGPRTYGAPCPREEDSKSPAKGRSQEGTAEIPAECQEEHSKTPEERNLTSSPAMNGDLAKLACSEAPTDVSKTWVTSSADPVSEHGGSTSAVRLANISVPASESPRLSSRPSSPCHSQLSETQSPAASEASSICLPVTPASPSAVLPAEPPGHSPSSELPAEAAPETLSPNSSPVETVSGHHSPEQPPVLLPQLLTEGAELPDITRTFPCGEEAAARGHTESRPSSLAQRRFSEGVLQPPSQDQEKLGGSLATLPQGQGSQSALDRPFGSGTESNWSLSQSFEWTFPTRPSGLGVWRLDSPPPSPITEASEAAEAAEADSWAVSGRGEGVSQVGPGTPPAPESPRKPISGVQGNDPGISLPQRDDGESQPRSPALLPSTVEGPPGAPLLQAKENYEDQEPLVGHESPITLAAREAALPVLEPALGQQQPTPSDQPCILFVDVPDPEQALSTEEDVVTLGWAETTLPMTEAQEPCSVSPEPTGPESSSRWLDDLLASPPPNSGSARRAAGAELKDRQSPSTCSEGLLGWAQKDLQSEFGVATDSHHSSFGSSSWSQDTSQNYSLGGRSPVGDTGLGKRDWSSKCGQGSGEGSTREWASRHSLGQEVIGIGGSQDESEVPVRERAVGRPAQLGAQGLEADAQQWEFGKRESQDPHSIHDKELQDQEFGKRDSLGSFSTRDASLQDWEFGKRASVSTNQDTDENDQELGMKNLSRGYSSQDAEEQDREFEKRDSVLDIHGSRATAQQNQEFGKSAWFQDYSSGGGGSRVLGSQERGFGIRSLSSGFSPEEAQQQDEEFEKKTPVGEDRFCEASRDVGHLEEGASGGLLSPSTPHSRDGAARPKDEGSWQDGDSSQEITRLQGRMQAESQSPTNVDLEDKEREQRGWAGEFSLGVAAQSEAAFSPGRQDWSRDVCVEASESSYQFGIIGNDRVSGAGLSPSRKSGGGHFVPPGETKAGAVDWTDQLGLRNLEVSSCVSSEGPSEARENVVGQMGWSDSLGLNNGDLARRLGTGESEEPRSLGVGEKDWTSSVEARNRDLPGQAEVGRHSQARESGVGEPDWSGAEAGEFLKSRERGVGQADWTPDLGLRNMAPGAGCSPGEPRELGVGQVDWGDDLGLRNLEVSCDLESGGSRGCGVGQMDWAQDLGLRNLRLCGAPSEVRECGVGRVGPDLELDPKSSGSLSPGLETEDPLEARELGVGEISGPETQGEDSSSPSFETPSEDTGMDTGEAPSLGASPSSCLTRSPPSGSQSLLEGIMTASSSKGAPQRESAASGSRVLLEEEGLAAGAGQGEPQEPSRAPLPSSRPQPDGEASQVEEVDGTWSLTGAARQNEQASAPPPRRPPRGLLPSCPSEDFSFIEDTEILDSAMYRSRANLGRKRGHRAPAIRPGGTLGLSETADSDTRLFQDSTEPRASRVPSSDEEVVEEPQSRRTRMSLGTKGLKVNLFPGLSPSALKAKLRSRNRSAEEGEVTESKSSQKESSVQRSKSCKVPGLGKPLTLPPKPEKSSGSEGSSPNWLQALKLKKKKI</sequence>
<dbReference type="EMBL" id="BX546441">
    <property type="protein sequence ID" value="CAM22340.1"/>
    <property type="status" value="ALT_SEQ"/>
    <property type="molecule type" value="Genomic_DNA"/>
</dbReference>
<dbReference type="EMBL" id="AK129436">
    <property type="protein sequence ID" value="BAC98246.1"/>
    <property type="molecule type" value="mRNA"/>
</dbReference>
<dbReference type="EMBL" id="BC024499">
    <property type="protein sequence ID" value="AAH24499.1"/>
    <property type="molecule type" value="mRNA"/>
</dbReference>
<dbReference type="EMBL" id="BC025943">
    <property type="protein sequence ID" value="AAH25943.1"/>
    <property type="molecule type" value="mRNA"/>
</dbReference>
<dbReference type="CCDS" id="CCDS38166.1"/>
<dbReference type="RefSeq" id="NP_001074729.1">
    <property type="nucleotide sequence ID" value="NM_001081260.2"/>
</dbReference>
<dbReference type="RefSeq" id="XP_017173105.1">
    <property type="nucleotide sequence ID" value="XM_017317616.3"/>
</dbReference>
<dbReference type="RefSeq" id="XP_030106056.1">
    <property type="nucleotide sequence ID" value="XM_030250196.2"/>
</dbReference>
<dbReference type="RefSeq" id="XP_030106057.1">
    <property type="nucleotide sequence ID" value="XM_030250197.2"/>
</dbReference>
<dbReference type="RefSeq" id="XP_036017073.1">
    <property type="nucleotide sequence ID" value="XM_036161180.1"/>
</dbReference>
<dbReference type="BioGRID" id="230718">
    <property type="interactions" value="18"/>
</dbReference>
<dbReference type="FunCoup" id="P58871">
    <property type="interactions" value="334"/>
</dbReference>
<dbReference type="IntAct" id="P58871">
    <property type="interactions" value="13"/>
</dbReference>
<dbReference type="MINT" id="P58871"/>
<dbReference type="STRING" id="10090.ENSMUSP00000107232"/>
<dbReference type="ChEMBL" id="CHEMBL4879443"/>
<dbReference type="GlyGen" id="P58871">
    <property type="glycosylation" value="5 sites, 1 N-linked glycan (1 site), 1 O-linked glycan (2 sites)"/>
</dbReference>
<dbReference type="iPTMnet" id="P58871"/>
<dbReference type="PhosphoSitePlus" id="P58871"/>
<dbReference type="jPOST" id="P58871"/>
<dbReference type="PaxDb" id="10090-ENSMUSP00000107232"/>
<dbReference type="PeptideAtlas" id="P58871"/>
<dbReference type="ProteomicsDB" id="263070"/>
<dbReference type="Pumba" id="P58871"/>
<dbReference type="Antibodypedia" id="27306">
    <property type="antibodies" value="206 antibodies from 26 providers"/>
</dbReference>
<dbReference type="Ensembl" id="ENSMUST00000111605.9">
    <property type="protein sequence ID" value="ENSMUSP00000107232.3"/>
    <property type="gene ID" value="ENSMUSG00000033955.14"/>
</dbReference>
<dbReference type="GeneID" id="228140"/>
<dbReference type="KEGG" id="mmu:228140"/>
<dbReference type="UCSC" id="uc012byp.1">
    <property type="organism name" value="mouse"/>
</dbReference>
<dbReference type="AGR" id="MGI:2446193"/>
<dbReference type="CTD" id="85456"/>
<dbReference type="MGI" id="MGI:2446193">
    <property type="gene designation" value="Tnks1bp1"/>
</dbReference>
<dbReference type="VEuPathDB" id="HostDB:ENSMUSG00000033955"/>
<dbReference type="eggNOG" id="ENOG502QSXZ">
    <property type="taxonomic scope" value="Eukaryota"/>
</dbReference>
<dbReference type="GeneTree" id="ENSGT00940000154184"/>
<dbReference type="HOGENOM" id="CLU_003005_0_0_1"/>
<dbReference type="InParanoid" id="P58871"/>
<dbReference type="OMA" id="PNQAREC"/>
<dbReference type="OrthoDB" id="9943385at2759"/>
<dbReference type="PhylomeDB" id="P58871"/>
<dbReference type="TreeFam" id="TF336029"/>
<dbReference type="Reactome" id="R-MMU-429947">
    <property type="pathway name" value="Deadenylation of mRNA"/>
</dbReference>
<dbReference type="Reactome" id="R-MMU-6804115">
    <property type="pathway name" value="TP53 regulates transcription of additional cell cycle genes whose exact role in the p53 pathway remain uncertain"/>
</dbReference>
<dbReference type="BioGRID-ORCS" id="228140">
    <property type="hits" value="4 hits in 75 CRISPR screens"/>
</dbReference>
<dbReference type="ChiTaRS" id="Tnks1bp1">
    <property type="organism name" value="mouse"/>
</dbReference>
<dbReference type="PRO" id="PR:P58871"/>
<dbReference type="Proteomes" id="UP000000589">
    <property type="component" value="Chromosome 2"/>
</dbReference>
<dbReference type="RNAct" id="P58871">
    <property type="molecule type" value="protein"/>
</dbReference>
<dbReference type="Bgee" id="ENSMUSG00000033955">
    <property type="expression patterns" value="Expressed in embryonic brain and 171 other cell types or tissues"/>
</dbReference>
<dbReference type="ExpressionAtlas" id="P58871">
    <property type="expression patterns" value="baseline and differential"/>
</dbReference>
<dbReference type="GO" id="GO:0005912">
    <property type="term" value="C:adherens junction"/>
    <property type="evidence" value="ECO:0007669"/>
    <property type="project" value="Ensembl"/>
</dbReference>
<dbReference type="GO" id="GO:0030014">
    <property type="term" value="C:CCR4-NOT complex"/>
    <property type="evidence" value="ECO:0000250"/>
    <property type="project" value="UniProtKB"/>
</dbReference>
<dbReference type="GO" id="GO:0005856">
    <property type="term" value="C:cytoskeleton"/>
    <property type="evidence" value="ECO:0007669"/>
    <property type="project" value="UniProtKB-SubCell"/>
</dbReference>
<dbReference type="GO" id="GO:0005829">
    <property type="term" value="C:cytosol"/>
    <property type="evidence" value="ECO:0000304"/>
    <property type="project" value="Reactome"/>
</dbReference>
<dbReference type="GO" id="GO:0000792">
    <property type="term" value="C:heterochromatin"/>
    <property type="evidence" value="ECO:0007669"/>
    <property type="project" value="Ensembl"/>
</dbReference>
<dbReference type="GO" id="GO:0005634">
    <property type="term" value="C:nucleus"/>
    <property type="evidence" value="ECO:0007669"/>
    <property type="project" value="UniProtKB-SubCell"/>
</dbReference>
<dbReference type="GO" id="GO:0071532">
    <property type="term" value="F:ankyrin repeat binding"/>
    <property type="evidence" value="ECO:0007669"/>
    <property type="project" value="Ensembl"/>
</dbReference>
<dbReference type="GO" id="GO:0019899">
    <property type="term" value="F:enzyme binding"/>
    <property type="evidence" value="ECO:0007669"/>
    <property type="project" value="Ensembl"/>
</dbReference>
<dbReference type="GO" id="GO:0043539">
    <property type="term" value="F:protein serine/threonine kinase activator activity"/>
    <property type="evidence" value="ECO:0007669"/>
    <property type="project" value="Ensembl"/>
</dbReference>
<dbReference type="GO" id="GO:0044877">
    <property type="term" value="F:protein-containing complex binding"/>
    <property type="evidence" value="ECO:0007669"/>
    <property type="project" value="Ensembl"/>
</dbReference>
<dbReference type="GO" id="GO:0071479">
    <property type="term" value="P:cellular response to ionizing radiation"/>
    <property type="evidence" value="ECO:0007669"/>
    <property type="project" value="Ensembl"/>
</dbReference>
<dbReference type="GO" id="GO:0006302">
    <property type="term" value="P:double-strand break repair"/>
    <property type="evidence" value="ECO:0007669"/>
    <property type="project" value="Ensembl"/>
</dbReference>
<dbReference type="InterPro" id="IPR032764">
    <property type="entry name" value="Tankyrase-bd_C"/>
</dbReference>
<dbReference type="InterPro" id="IPR040006">
    <property type="entry name" value="TNKS1BP1-like"/>
</dbReference>
<dbReference type="PANTHER" id="PTHR22042:SF2">
    <property type="entry name" value="182 KDA TANKYRASE-1-BINDING PROTEIN"/>
    <property type="match status" value="1"/>
</dbReference>
<dbReference type="PANTHER" id="PTHR22042">
    <property type="entry name" value="TANKYRASE 1 BINDING PROTEIN"/>
    <property type="match status" value="1"/>
</dbReference>
<dbReference type="Pfam" id="PF15327">
    <property type="entry name" value="Tankyrase_bdg_C"/>
    <property type="match status" value="1"/>
</dbReference>
<dbReference type="SMART" id="SM01319">
    <property type="entry name" value="Tankyrase_bdg_C"/>
    <property type="match status" value="1"/>
</dbReference>
<gene>
    <name type="primary">Tnks1bp1</name>
    <name type="synonym">Kiaa1741</name>
    <name type="synonym">Tab182</name>
</gene>
<reference key="1">
    <citation type="journal article" date="2009" name="PLoS Biol.">
        <title>Lineage-specific biology revealed by a finished genome assembly of the mouse.</title>
        <authorList>
            <person name="Church D.M."/>
            <person name="Goodstadt L."/>
            <person name="Hillier L.W."/>
            <person name="Zody M.C."/>
            <person name="Goldstein S."/>
            <person name="She X."/>
            <person name="Bult C.J."/>
            <person name="Agarwala R."/>
            <person name="Cherry J.L."/>
            <person name="DiCuccio M."/>
            <person name="Hlavina W."/>
            <person name="Kapustin Y."/>
            <person name="Meric P."/>
            <person name="Maglott D."/>
            <person name="Birtle Z."/>
            <person name="Marques A.C."/>
            <person name="Graves T."/>
            <person name="Zhou S."/>
            <person name="Teague B."/>
            <person name="Potamousis K."/>
            <person name="Churas C."/>
            <person name="Place M."/>
            <person name="Herschleb J."/>
            <person name="Runnheim R."/>
            <person name="Forrest D."/>
            <person name="Amos-Landgraf J."/>
            <person name="Schwartz D.C."/>
            <person name="Cheng Z."/>
            <person name="Lindblad-Toh K."/>
            <person name="Eichler E.E."/>
            <person name="Ponting C.P."/>
        </authorList>
    </citation>
    <scope>NUCLEOTIDE SEQUENCE [LARGE SCALE GENOMIC DNA]</scope>
    <source>
        <strain>C57BL/6J</strain>
    </source>
</reference>
<reference key="2">
    <citation type="journal article" date="2003" name="DNA Res.">
        <title>Prediction of the coding sequences of mouse homologues of KIAA gene: III. The complete nucleotide sequences of 500 mouse KIAA-homologous cDNAs identified by screening of terminal sequences of cDNA clones randomly sampled from size-fractionated libraries.</title>
        <authorList>
            <person name="Okazaki N."/>
            <person name="Kikuno R."/>
            <person name="Ohara R."/>
            <person name="Inamoto S."/>
            <person name="Koseki H."/>
            <person name="Hiraoka S."/>
            <person name="Saga Y."/>
            <person name="Nagase T."/>
            <person name="Ohara O."/>
            <person name="Koga H."/>
        </authorList>
    </citation>
    <scope>NUCLEOTIDE SEQUENCE [LARGE SCALE MRNA] OF 397-1720</scope>
</reference>
<reference key="3">
    <citation type="journal article" date="2004" name="Genome Res.">
        <title>The status, quality, and expansion of the NIH full-length cDNA project: the Mammalian Gene Collection (MGC).</title>
        <authorList>
            <consortium name="The MGC Project Team"/>
        </authorList>
    </citation>
    <scope>NUCLEOTIDE SEQUENCE [LARGE SCALE MRNA] OF 812-1720</scope>
    <source>
        <tissue>Colon</tissue>
        <tissue>Liver</tissue>
    </source>
</reference>
<reference key="4">
    <citation type="journal article" date="2004" name="Mol. Cell. Proteomics">
        <title>Phosphoproteomic analysis of the developing mouse brain.</title>
        <authorList>
            <person name="Ballif B.A."/>
            <person name="Villen J."/>
            <person name="Beausoleil S.A."/>
            <person name="Schwartz D."/>
            <person name="Gygi S.P."/>
        </authorList>
    </citation>
    <scope>IDENTIFICATION BY MASS SPECTROMETRY [LARGE SCALE ANALYSIS]</scope>
    <source>
        <tissue>Embryonic brain</tissue>
    </source>
</reference>
<reference key="5">
    <citation type="journal article" date="2007" name="Proc. Natl. Acad. Sci. U.S.A.">
        <title>Large-scale phosphorylation analysis of mouse liver.</title>
        <authorList>
            <person name="Villen J."/>
            <person name="Beausoleil S.A."/>
            <person name="Gerber S.A."/>
            <person name="Gygi S.P."/>
        </authorList>
    </citation>
    <scope>PHOSPHORYLATION [LARGE SCALE ANALYSIS] AT THR-533; SER-539; SER-568; SER-796; SER-887; SER-1131; SER-1212; SER-1290; SER-1375; SER-1611 AND SER-1612</scope>
    <scope>IDENTIFICATION BY MASS SPECTROMETRY [LARGE SCALE ANALYSIS]</scope>
    <source>
        <tissue>Liver</tissue>
    </source>
</reference>
<reference key="6">
    <citation type="journal article" date="2008" name="J. Proteome Res.">
        <title>Specific phosphopeptide enrichment with immobilized titanium ion affinity chromatography adsorbent for phosphoproteome analysis.</title>
        <authorList>
            <person name="Zhou H."/>
            <person name="Ye M."/>
            <person name="Dong J."/>
            <person name="Han G."/>
            <person name="Jiang X."/>
            <person name="Wu R."/>
            <person name="Zou H."/>
        </authorList>
    </citation>
    <scope>IDENTIFICATION BY MASS SPECTROMETRY [LARGE SCALE ANALYSIS]</scope>
    <source>
        <tissue>Liver</tissue>
    </source>
</reference>
<reference key="7">
    <citation type="journal article" date="2009" name="Mol. Cell. Proteomics">
        <title>Large scale localization of protein phosphorylation by use of electron capture dissociation mass spectrometry.</title>
        <authorList>
            <person name="Sweet S.M."/>
            <person name="Bailey C.M."/>
            <person name="Cunningham D.L."/>
            <person name="Heath J.K."/>
            <person name="Cooper H.J."/>
        </authorList>
    </citation>
    <scope>PHOSPHORYLATION [LARGE SCALE ANALYSIS] AT SER-1611 AND SER-1612</scope>
    <scope>IDENTIFICATION BY MASS SPECTROMETRY [LARGE SCALE ANALYSIS]</scope>
    <source>
        <tissue>Embryonic fibroblast</tissue>
    </source>
</reference>
<reference key="8">
    <citation type="journal article" date="2010" name="Cell">
        <title>A tissue-specific atlas of mouse protein phosphorylation and expression.</title>
        <authorList>
            <person name="Huttlin E.L."/>
            <person name="Jedrychowski M.P."/>
            <person name="Elias J.E."/>
            <person name="Goswami T."/>
            <person name="Rad R."/>
            <person name="Beausoleil S.A."/>
            <person name="Villen J."/>
            <person name="Haas W."/>
            <person name="Sowa M.E."/>
            <person name="Gygi S.P."/>
        </authorList>
    </citation>
    <scope>PHOSPHORYLATION [LARGE SCALE ANALYSIS] AT SER-300; SER-429; SER-496; SER-500; THR-503; THR-533; SER-539; SER-568; SER-713; SER-796; SER-887; SER-1022; SER-1063; SER-1131; SER-1212; SER-1246; THR-1275; SER-1290; SER-1373; SER-1375; SER-1437; SER-1442; SER-1611; SER-1612 AND SER-1657</scope>
    <scope>IDENTIFICATION BY MASS SPECTROMETRY [LARGE SCALE ANALYSIS]</scope>
    <source>
        <tissue>Brain</tissue>
        <tissue>Brown adipose tissue</tissue>
        <tissue>Heart</tissue>
        <tissue>Kidney</tissue>
        <tissue>Liver</tissue>
        <tissue>Lung</tissue>
        <tissue>Pancreas</tissue>
        <tissue>Spleen</tissue>
        <tissue>Testis</tissue>
    </source>
</reference>
<protein>
    <recommendedName>
        <fullName>182 kDa tankyrase-1-binding protein</fullName>
    </recommendedName>
</protein>
<evidence type="ECO:0000250" key="1"/>
<evidence type="ECO:0000250" key="2">
    <source>
        <dbReference type="UniProtKB" id="Q9C0C2"/>
    </source>
</evidence>
<evidence type="ECO:0000255" key="3"/>
<evidence type="ECO:0000256" key="4">
    <source>
        <dbReference type="SAM" id="MobiDB-lite"/>
    </source>
</evidence>
<evidence type="ECO:0000305" key="5"/>
<evidence type="ECO:0007744" key="6">
    <source>
    </source>
</evidence>
<evidence type="ECO:0007744" key="7">
    <source>
    </source>
</evidence>
<evidence type="ECO:0007744" key="8">
    <source>
    </source>
</evidence>
<organism>
    <name type="scientific">Mus musculus</name>
    <name type="common">Mouse</name>
    <dbReference type="NCBI Taxonomy" id="10090"/>
    <lineage>
        <taxon>Eukaryota</taxon>
        <taxon>Metazoa</taxon>
        <taxon>Chordata</taxon>
        <taxon>Craniata</taxon>
        <taxon>Vertebrata</taxon>
        <taxon>Euteleostomi</taxon>
        <taxon>Mammalia</taxon>
        <taxon>Eutheria</taxon>
        <taxon>Euarchontoglires</taxon>
        <taxon>Glires</taxon>
        <taxon>Rodentia</taxon>
        <taxon>Myomorpha</taxon>
        <taxon>Muroidea</taxon>
        <taxon>Muridae</taxon>
        <taxon>Murinae</taxon>
        <taxon>Mus</taxon>
        <taxon>Mus</taxon>
    </lineage>
</organism>
<keyword id="KW-0013">ADP-ribosylation</keyword>
<keyword id="KW-0158">Chromosome</keyword>
<keyword id="KW-0963">Cytoplasm</keyword>
<keyword id="KW-0206">Cytoskeleton</keyword>
<keyword id="KW-0488">Methylation</keyword>
<keyword id="KW-0539">Nucleus</keyword>
<keyword id="KW-0597">Phosphoprotein</keyword>
<keyword id="KW-1185">Reference proteome</keyword>
<name>TB182_MOUSE</name>
<comment type="subunit">
    <text evidence="1">Binds to the ANK repeat domain of TNKS1 and TNKS2.</text>
</comment>
<comment type="subcellular location">
    <subcellularLocation>
        <location evidence="1">Nucleus</location>
    </subcellularLocation>
    <subcellularLocation>
        <location evidence="1">Cytoplasm</location>
        <location evidence="1">Cytoskeleton</location>
    </subcellularLocation>
    <subcellularLocation>
        <location evidence="1">Chromosome</location>
    </subcellularLocation>
    <text evidence="1">Colocalizes with chromosomes during mitosis, and in the cytoplasm with cortical actin.</text>
</comment>
<comment type="PTM">
    <text evidence="1">ADP-ribosylated by TNKS1.</text>
</comment>
<comment type="sequence caution" evidence="5">
    <conflict type="erroneous gene model prediction">
        <sequence resource="EMBL-CDS" id="CAM22340"/>
    </conflict>
</comment>
<feature type="chain" id="PRO_0000072438" description="182 kDa tankyrase-1-binding protein">
    <location>
        <begin position="1"/>
        <end position="1720"/>
    </location>
</feature>
<feature type="region of interest" description="Disordered" evidence="4">
    <location>
        <begin position="1"/>
        <end position="137"/>
    </location>
</feature>
<feature type="region of interest" description="Disordered" evidence="4">
    <location>
        <begin position="185"/>
        <end position="472"/>
    </location>
</feature>
<feature type="region of interest" description="Acidic">
    <location>
        <begin position="209"/>
        <end position="1563"/>
    </location>
</feature>
<feature type="region of interest" description="Disordered" evidence="4">
    <location>
        <begin position="485"/>
        <end position="595"/>
    </location>
</feature>
<feature type="region of interest" description="Disordered" evidence="4">
    <location>
        <begin position="659"/>
        <end position="720"/>
    </location>
</feature>
<feature type="region of interest" description="Disordered" evidence="4">
    <location>
        <begin position="734"/>
        <end position="924"/>
    </location>
</feature>
<feature type="region of interest" description="Disordered" evidence="4">
    <location>
        <begin position="955"/>
        <end position="1081"/>
    </location>
</feature>
<feature type="region of interest" description="Disordered" evidence="4">
    <location>
        <begin position="1128"/>
        <end position="1153"/>
    </location>
</feature>
<feature type="region of interest" description="Disordered" evidence="4">
    <location>
        <begin position="1198"/>
        <end position="1255"/>
    </location>
</feature>
<feature type="region of interest" description="Disordered" evidence="4">
    <location>
        <begin position="1358"/>
        <end position="1546"/>
    </location>
</feature>
<feature type="region of interest" description="Tankyrase-binding" evidence="1">
    <location>
        <begin position="1440"/>
        <end position="1532"/>
    </location>
</feature>
<feature type="region of interest" description="Disordered" evidence="4">
    <location>
        <begin position="1567"/>
        <end position="1720"/>
    </location>
</feature>
<feature type="short sequence motif" description="Nuclear localization signal" evidence="3">
    <location>
        <begin position="1620"/>
        <end position="1626"/>
    </location>
</feature>
<feature type="short sequence motif" description="Nuclear localization signal" evidence="3">
    <location>
        <begin position="1714"/>
        <end position="1719"/>
    </location>
</feature>
<feature type="compositionally biased region" description="Basic and acidic residues" evidence="4">
    <location>
        <begin position="117"/>
        <end position="127"/>
    </location>
</feature>
<feature type="compositionally biased region" description="Basic and acidic residues" evidence="4">
    <location>
        <begin position="232"/>
        <end position="243"/>
    </location>
</feature>
<feature type="compositionally biased region" description="Polar residues" evidence="4">
    <location>
        <begin position="266"/>
        <end position="287"/>
    </location>
</feature>
<feature type="compositionally biased region" description="Low complexity" evidence="4">
    <location>
        <begin position="296"/>
        <end position="316"/>
    </location>
</feature>
<feature type="compositionally biased region" description="Polar residues" evidence="4">
    <location>
        <begin position="317"/>
        <end position="327"/>
    </location>
</feature>
<feature type="compositionally biased region" description="Polar residues" evidence="4">
    <location>
        <begin position="449"/>
        <end position="459"/>
    </location>
</feature>
<feature type="compositionally biased region" description="Low complexity" evidence="4">
    <location>
        <begin position="502"/>
        <end position="518"/>
    </location>
</feature>
<feature type="compositionally biased region" description="Low complexity" evidence="4">
    <location>
        <begin position="742"/>
        <end position="758"/>
    </location>
</feature>
<feature type="compositionally biased region" description="Basic and acidic residues" evidence="4">
    <location>
        <begin position="840"/>
        <end position="866"/>
    </location>
</feature>
<feature type="compositionally biased region" description="Basic and acidic residues" evidence="4">
    <location>
        <begin position="991"/>
        <end position="1014"/>
    </location>
</feature>
<feature type="compositionally biased region" description="Basic and acidic residues" evidence="4">
    <location>
        <begin position="1027"/>
        <end position="1039"/>
    </location>
</feature>
<feature type="compositionally biased region" description="Basic and acidic residues" evidence="4">
    <location>
        <begin position="1208"/>
        <end position="1230"/>
    </location>
</feature>
<feature type="compositionally biased region" description="Polar residues" evidence="4">
    <location>
        <begin position="1402"/>
        <end position="1411"/>
    </location>
</feature>
<feature type="compositionally biased region" description="Polar residues" evidence="4">
    <location>
        <begin position="1428"/>
        <end position="1457"/>
    </location>
</feature>
<feature type="compositionally biased region" description="Low complexity" evidence="4">
    <location>
        <begin position="1477"/>
        <end position="1489"/>
    </location>
</feature>
<feature type="compositionally biased region" description="Polar residues" evidence="4">
    <location>
        <begin position="1515"/>
        <end position="1527"/>
    </location>
</feature>
<feature type="compositionally biased region" description="Basic residues" evidence="4">
    <location>
        <begin position="1568"/>
        <end position="1577"/>
    </location>
</feature>
<feature type="compositionally biased region" description="Basic and acidic residues" evidence="4">
    <location>
        <begin position="1593"/>
        <end position="1606"/>
    </location>
</feature>
<feature type="compositionally biased region" description="Basic and acidic residues" evidence="4">
    <location>
        <begin position="1656"/>
        <end position="1670"/>
    </location>
</feature>
<feature type="compositionally biased region" description="Low complexity" evidence="4">
    <location>
        <begin position="1671"/>
        <end position="1690"/>
    </location>
</feature>
<feature type="modified residue" description="Phosphoserine" evidence="2">
    <location>
        <position position="14"/>
    </location>
</feature>
<feature type="modified residue" description="Phosphothreonine" evidence="2">
    <location>
        <position position="131"/>
    </location>
</feature>
<feature type="modified residue" description="Phosphoserine" evidence="2">
    <location>
        <position position="178"/>
    </location>
</feature>
<feature type="modified residue" description="Phosphoserine" evidence="2">
    <location>
        <position position="220"/>
    </location>
</feature>
<feature type="modified residue" description="Phosphothreonine" evidence="2">
    <location>
        <position position="238"/>
    </location>
</feature>
<feature type="modified residue" description="Phosphoserine" evidence="2">
    <location>
        <position position="286"/>
    </location>
</feature>
<feature type="modified residue" description="Phosphoserine" evidence="8">
    <location>
        <position position="300"/>
    </location>
</feature>
<feature type="modified residue" description="Phosphoserine" evidence="8">
    <location>
        <position position="429"/>
    </location>
</feature>
<feature type="modified residue" description="Phosphoserine" evidence="2">
    <location>
        <position position="437"/>
    </location>
</feature>
<feature type="modified residue" description="Phosphoserine" evidence="8">
    <location>
        <position position="496"/>
    </location>
</feature>
<feature type="modified residue" description="Phosphoserine" evidence="8">
    <location>
        <position position="500"/>
    </location>
</feature>
<feature type="modified residue" description="Phosphothreonine" evidence="8">
    <location>
        <position position="503"/>
    </location>
</feature>
<feature type="modified residue" description="Phosphothreonine" evidence="6 8">
    <location>
        <position position="533"/>
    </location>
</feature>
<feature type="modified residue" description="Phosphoserine" evidence="6 8">
    <location>
        <position position="539"/>
    </location>
</feature>
<feature type="modified residue" description="Phosphoserine" evidence="6 8">
    <location>
        <position position="568"/>
    </location>
</feature>
<feature type="modified residue" description="Phosphoserine" evidence="2">
    <location>
        <position position="602"/>
    </location>
</feature>
<feature type="modified residue" description="Phosphoserine" evidence="2">
    <location>
        <position position="673"/>
    </location>
</feature>
<feature type="modified residue" description="Phosphoserine" evidence="2">
    <location>
        <position position="692"/>
    </location>
</feature>
<feature type="modified residue" description="Phosphoserine" evidence="8">
    <location>
        <position position="713"/>
    </location>
</feature>
<feature type="modified residue" description="Phosphoserine" evidence="2">
    <location>
        <position position="763"/>
    </location>
</feature>
<feature type="modified residue" description="Phosphoserine" evidence="6 8">
    <location>
        <position position="796"/>
    </location>
</feature>
<feature type="modified residue" description="Phosphoserine" evidence="2">
    <location>
        <position position="807"/>
    </location>
</feature>
<feature type="modified residue" description="Phosphoserine" evidence="2">
    <location>
        <position position="845"/>
    </location>
</feature>
<feature type="modified residue" description="Phosphoserine" evidence="2">
    <location>
        <position position="866"/>
    </location>
</feature>
<feature type="modified residue" description="Phosphoserine" evidence="2">
    <location>
        <position position="871"/>
    </location>
</feature>
<feature type="modified residue" description="Phosphoserine" evidence="2">
    <location>
        <position position="876"/>
    </location>
</feature>
<feature type="modified residue" description="Phosphoserine" evidence="6 8">
    <location>
        <position position="887"/>
    </location>
</feature>
<feature type="modified residue" description="Phosphoserine" evidence="2">
    <location>
        <position position="912"/>
    </location>
</feature>
<feature type="modified residue" description="Phosphoserine" evidence="2">
    <location>
        <position position="976"/>
    </location>
</feature>
<feature type="modified residue" description="Phosphoserine" evidence="2">
    <location>
        <position position="980"/>
    </location>
</feature>
<feature type="modified residue" description="Phosphoserine" evidence="2">
    <location>
        <position position="1006"/>
    </location>
</feature>
<feature type="modified residue" description="Phosphoserine" evidence="2">
    <location>
        <position position="1017"/>
    </location>
</feature>
<feature type="modified residue" description="Phosphoserine" evidence="8">
    <location>
        <position position="1022"/>
    </location>
</feature>
<feature type="modified residue" description="Phosphoserine" evidence="2">
    <location>
        <position position="1047"/>
    </location>
</feature>
<feature type="modified residue" description="Phosphoserine" evidence="8">
    <location>
        <position position="1063"/>
    </location>
</feature>
<feature type="modified residue" description="Phosphoserine" evidence="2">
    <location>
        <position position="1084"/>
    </location>
</feature>
<feature type="modified residue" description="Phosphoserine" evidence="2">
    <location>
        <position position="1096"/>
    </location>
</feature>
<feature type="modified residue" description="Phosphoserine" evidence="2">
    <location>
        <position position="1126"/>
    </location>
</feature>
<feature type="modified residue" description="Phosphoserine" evidence="6 8">
    <location>
        <position position="1131"/>
    </location>
</feature>
<feature type="modified residue" description="Phosphoserine" evidence="2">
    <location>
        <position position="1171"/>
    </location>
</feature>
<feature type="modified residue" description="Phosphoserine" evidence="6 8">
    <location>
        <position position="1212"/>
    </location>
</feature>
<feature type="modified residue" description="Phosphoserine" evidence="2">
    <location>
        <position position="1241"/>
    </location>
</feature>
<feature type="modified residue" description="Phosphoserine" evidence="8">
    <location>
        <position position="1246"/>
    </location>
</feature>
<feature type="modified residue" description="Phosphothreonine" evidence="8">
    <location>
        <position position="1275"/>
    </location>
</feature>
<feature type="modified residue" description="Phosphoserine" evidence="6 8">
    <location>
        <position position="1290"/>
    </location>
</feature>
<feature type="modified residue" description="Phosphoserine" evidence="2">
    <location>
        <position position="1321"/>
    </location>
</feature>
<feature type="modified residue" description="Phosphoserine" evidence="2">
    <location>
        <position position="1324"/>
    </location>
</feature>
<feature type="modified residue" description="Phosphoserine" evidence="8">
    <location>
        <position position="1373"/>
    </location>
</feature>
<feature type="modified residue" description="Phosphoserine" evidence="6 8">
    <location>
        <position position="1375"/>
    </location>
</feature>
<feature type="modified residue" description="Phosphoserine" evidence="2">
    <location>
        <position position="1425"/>
    </location>
</feature>
<feature type="modified residue" description="Phosphoserine" evidence="2">
    <location>
        <position position="1429"/>
    </location>
</feature>
<feature type="modified residue" description="Phosphoserine" evidence="8">
    <location>
        <position position="1437"/>
    </location>
</feature>
<feature type="modified residue" description="Phosphoserine" evidence="2">
    <location>
        <position position="1440"/>
    </location>
</feature>
<feature type="modified residue" description="Phosphoserine" evidence="8">
    <location>
        <position position="1442"/>
    </location>
</feature>
<feature type="modified residue" description="Phosphoserine" evidence="2">
    <location>
        <position position="1463"/>
    </location>
</feature>
<feature type="modified residue" description="Phosphoserine" evidence="2">
    <location>
        <position position="1466"/>
    </location>
</feature>
<feature type="modified residue" description="Phosphoserine" evidence="2">
    <location>
        <position position="1496"/>
    </location>
</feature>
<feature type="modified residue" description="Phosphoserine" evidence="2">
    <location>
        <position position="1549"/>
    </location>
</feature>
<feature type="modified residue" description="Phosphothreonine" evidence="2">
    <location>
        <position position="1554"/>
    </location>
</feature>
<feature type="modified residue" description="Phosphoserine" evidence="6 7 8">
    <location>
        <position position="1611"/>
    </location>
</feature>
<feature type="modified residue" description="Phosphoserine" evidence="6 7 8">
    <location>
        <position position="1612"/>
    </location>
</feature>
<feature type="modified residue" description="Phosphoserine" evidence="2">
    <location>
        <position position="1622"/>
    </location>
</feature>
<feature type="modified residue" description="N6-methyllysine" evidence="2">
    <location>
        <position position="1635"/>
    </location>
</feature>
<feature type="modified residue" description="Phosphoserine" evidence="2">
    <location>
        <position position="1643"/>
    </location>
</feature>
<feature type="modified residue" description="Phosphoserine" evidence="8">
    <location>
        <position position="1657"/>
    </location>
</feature>
<feature type="modified residue" description="Phosphoserine" evidence="2">
    <location>
        <position position="1706"/>
    </location>
</feature>
<feature type="sequence conflict" description="In Ref. 2; BAC98246 and 3; AAH25943." evidence="5" ref="2 3">
    <original>N</original>
    <variation>D</variation>
    <location>
        <position position="941"/>
    </location>
</feature>
<proteinExistence type="evidence at protein level"/>
<accession>P58871</accession>
<accession>A2BH84</accession>
<accession>Q6ZPI8</accession>